<name>FLUC3_STRAW</name>
<sequence length="204" mass="21754">MRADESGPERESREPTHIPGAEPELGGEPTPRGEPGPGFEPGPGGEPAPSRAPFRSRLRKGVLAAVALGGVLGGSARYALGLTFPTPRGTFPVTTFAVNVSGAFLLALLLVYVLEIWPPTRYVRPFAAVGFLGSFTTFSTWMVDTDRLLGHGHYAVAAFNVFGSLFAGLAATGLGLAIGRMALARRVRLAARHGRARRYGWWVR</sequence>
<feature type="chain" id="PRO_0000110191" description="Fluoride-specific ion channel FluC 3">
    <location>
        <begin position="1"/>
        <end position="204"/>
    </location>
</feature>
<feature type="transmembrane region" description="Helical" evidence="1">
    <location>
        <begin position="62"/>
        <end position="82"/>
    </location>
</feature>
<feature type="transmembrane region" description="Helical" evidence="1">
    <location>
        <begin position="96"/>
        <end position="116"/>
    </location>
</feature>
<feature type="transmembrane region" description="Helical" evidence="1">
    <location>
        <begin position="125"/>
        <end position="145"/>
    </location>
</feature>
<feature type="transmembrane region" description="Helical" evidence="1">
    <location>
        <begin position="158"/>
        <end position="178"/>
    </location>
</feature>
<feature type="region of interest" description="Disordered" evidence="2">
    <location>
        <begin position="1"/>
        <end position="53"/>
    </location>
</feature>
<feature type="compositionally biased region" description="Basic and acidic residues" evidence="2">
    <location>
        <begin position="1"/>
        <end position="16"/>
    </location>
</feature>
<feature type="compositionally biased region" description="Pro residues" evidence="2">
    <location>
        <begin position="32"/>
        <end position="46"/>
    </location>
</feature>
<feature type="binding site" evidence="1">
    <location>
        <position position="133"/>
    </location>
    <ligand>
        <name>Na(+)</name>
        <dbReference type="ChEBI" id="CHEBI:29101"/>
        <note>structural</note>
    </ligand>
</feature>
<feature type="binding site" evidence="1">
    <location>
        <position position="136"/>
    </location>
    <ligand>
        <name>Na(+)</name>
        <dbReference type="ChEBI" id="CHEBI:29101"/>
        <note>structural</note>
    </ligand>
</feature>
<protein>
    <recommendedName>
        <fullName evidence="1">Fluoride-specific ion channel FluC 3</fullName>
    </recommendedName>
</protein>
<organism>
    <name type="scientific">Streptomyces avermitilis (strain ATCC 31267 / DSM 46492 / JCM 5070 / NBRC 14893 / NCIMB 12804 / NRRL 8165 / MA-4680)</name>
    <dbReference type="NCBI Taxonomy" id="227882"/>
    <lineage>
        <taxon>Bacteria</taxon>
        <taxon>Bacillati</taxon>
        <taxon>Actinomycetota</taxon>
        <taxon>Actinomycetes</taxon>
        <taxon>Kitasatosporales</taxon>
        <taxon>Streptomycetaceae</taxon>
        <taxon>Streptomyces</taxon>
    </lineage>
</organism>
<accession>Q82LR8</accession>
<dbReference type="EMBL" id="BA000030">
    <property type="protein sequence ID" value="BAC69653.1"/>
    <property type="molecule type" value="Genomic_DNA"/>
</dbReference>
<dbReference type="SMR" id="Q82LR8"/>
<dbReference type="KEGG" id="sma:SAVERM_1942"/>
<dbReference type="eggNOG" id="COG0239">
    <property type="taxonomic scope" value="Bacteria"/>
</dbReference>
<dbReference type="HOGENOM" id="CLU_114342_1_0_11"/>
<dbReference type="Proteomes" id="UP000000428">
    <property type="component" value="Chromosome"/>
</dbReference>
<dbReference type="GO" id="GO:0005886">
    <property type="term" value="C:plasma membrane"/>
    <property type="evidence" value="ECO:0007669"/>
    <property type="project" value="UniProtKB-SubCell"/>
</dbReference>
<dbReference type="GO" id="GO:0062054">
    <property type="term" value="F:fluoride channel activity"/>
    <property type="evidence" value="ECO:0007669"/>
    <property type="project" value="UniProtKB-UniRule"/>
</dbReference>
<dbReference type="GO" id="GO:0046872">
    <property type="term" value="F:metal ion binding"/>
    <property type="evidence" value="ECO:0007669"/>
    <property type="project" value="UniProtKB-KW"/>
</dbReference>
<dbReference type="GO" id="GO:0140114">
    <property type="term" value="P:cellular detoxification of fluoride"/>
    <property type="evidence" value="ECO:0007669"/>
    <property type="project" value="UniProtKB-UniRule"/>
</dbReference>
<dbReference type="HAMAP" id="MF_00454">
    <property type="entry name" value="FluC"/>
    <property type="match status" value="1"/>
</dbReference>
<dbReference type="InterPro" id="IPR003691">
    <property type="entry name" value="FluC"/>
</dbReference>
<dbReference type="PANTHER" id="PTHR28259">
    <property type="entry name" value="FLUORIDE EXPORT PROTEIN 1-RELATED"/>
    <property type="match status" value="1"/>
</dbReference>
<dbReference type="PANTHER" id="PTHR28259:SF1">
    <property type="entry name" value="FLUORIDE EXPORT PROTEIN 1-RELATED"/>
    <property type="match status" value="1"/>
</dbReference>
<dbReference type="Pfam" id="PF02537">
    <property type="entry name" value="CRCB"/>
    <property type="match status" value="1"/>
</dbReference>
<keyword id="KW-1003">Cell membrane</keyword>
<keyword id="KW-0407">Ion channel</keyword>
<keyword id="KW-0406">Ion transport</keyword>
<keyword id="KW-0472">Membrane</keyword>
<keyword id="KW-0479">Metal-binding</keyword>
<keyword id="KW-1185">Reference proteome</keyword>
<keyword id="KW-0915">Sodium</keyword>
<keyword id="KW-0812">Transmembrane</keyword>
<keyword id="KW-1133">Transmembrane helix</keyword>
<keyword id="KW-0813">Transport</keyword>
<reference key="1">
    <citation type="journal article" date="2001" name="Proc. Natl. Acad. Sci. U.S.A.">
        <title>Genome sequence of an industrial microorganism Streptomyces avermitilis: deducing the ability of producing secondary metabolites.</title>
        <authorList>
            <person name="Omura S."/>
            <person name="Ikeda H."/>
            <person name="Ishikawa J."/>
            <person name="Hanamoto A."/>
            <person name="Takahashi C."/>
            <person name="Shinose M."/>
            <person name="Takahashi Y."/>
            <person name="Horikawa H."/>
            <person name="Nakazawa H."/>
            <person name="Osonoe T."/>
            <person name="Kikuchi H."/>
            <person name="Shiba T."/>
            <person name="Sakaki Y."/>
            <person name="Hattori M."/>
        </authorList>
    </citation>
    <scope>NUCLEOTIDE SEQUENCE [LARGE SCALE GENOMIC DNA]</scope>
    <source>
        <strain>ATCC 31267 / DSM 46492 / JCM 5070 / NBRC 14893 / NCIMB 12804 / NRRL 8165 / MA-4680</strain>
    </source>
</reference>
<reference key="2">
    <citation type="journal article" date="2003" name="Nat. Biotechnol.">
        <title>Complete genome sequence and comparative analysis of the industrial microorganism Streptomyces avermitilis.</title>
        <authorList>
            <person name="Ikeda H."/>
            <person name="Ishikawa J."/>
            <person name="Hanamoto A."/>
            <person name="Shinose M."/>
            <person name="Kikuchi H."/>
            <person name="Shiba T."/>
            <person name="Sakaki Y."/>
            <person name="Hattori M."/>
            <person name="Omura S."/>
        </authorList>
    </citation>
    <scope>NUCLEOTIDE SEQUENCE [LARGE SCALE GENOMIC DNA]</scope>
    <source>
        <strain>ATCC 31267 / DSM 46492 / JCM 5070 / NBRC 14893 / NCIMB 12804 / NRRL 8165 / MA-4680</strain>
    </source>
</reference>
<comment type="function">
    <text evidence="1">Fluoride-specific ion channel. Important for reducing fluoride concentration in the cell, thus reducing its toxicity.</text>
</comment>
<comment type="catalytic activity">
    <reaction evidence="1">
        <text>fluoride(in) = fluoride(out)</text>
        <dbReference type="Rhea" id="RHEA:76159"/>
        <dbReference type="ChEBI" id="CHEBI:17051"/>
    </reaction>
    <physiologicalReaction direction="left-to-right" evidence="1">
        <dbReference type="Rhea" id="RHEA:76160"/>
    </physiologicalReaction>
</comment>
<comment type="activity regulation">
    <text evidence="1">Na(+) is not transported, but it plays an essential structural role and its presence is essential for fluoride channel function.</text>
</comment>
<comment type="subcellular location">
    <subcellularLocation>
        <location evidence="1">Cell membrane</location>
        <topology evidence="1">Multi-pass membrane protein</topology>
    </subcellularLocation>
</comment>
<comment type="similarity">
    <text evidence="1">Belongs to the fluoride channel Fluc/FEX (TC 1.A.43) family.</text>
</comment>
<proteinExistence type="inferred from homology"/>
<evidence type="ECO:0000255" key="1">
    <source>
        <dbReference type="HAMAP-Rule" id="MF_00454"/>
    </source>
</evidence>
<evidence type="ECO:0000256" key="2">
    <source>
        <dbReference type="SAM" id="MobiDB-lite"/>
    </source>
</evidence>
<gene>
    <name evidence="1" type="primary">fluC3</name>
    <name evidence="1" type="synonym">crcB3</name>
    <name type="ordered locus">SAV_1942</name>
</gene>